<name>RL28_PSEF5</name>
<sequence>MSRVCQVTGKGPVTGNNISHANNKTRRRFLPNLQHHRFWVESEKRFVRLRVSAKGMRIIDKRGIDVVLAEIRRDGGKV</sequence>
<protein>
    <recommendedName>
        <fullName evidence="1">Large ribosomal subunit protein bL28</fullName>
    </recommendedName>
    <alternativeName>
        <fullName evidence="3">50S ribosomal protein L28</fullName>
    </alternativeName>
</protein>
<dbReference type="EMBL" id="CP000076">
    <property type="protein sequence ID" value="AAY96271.1"/>
    <property type="molecule type" value="Genomic_DNA"/>
</dbReference>
<dbReference type="RefSeq" id="WP_011064219.1">
    <property type="nucleotide sequence ID" value="NC_004129.6"/>
</dbReference>
<dbReference type="SMR" id="Q4K3S6"/>
<dbReference type="STRING" id="220664.PFL_6049"/>
<dbReference type="DNASU" id="3481454"/>
<dbReference type="GeneID" id="57479008"/>
<dbReference type="KEGG" id="pfl:PFL_6049"/>
<dbReference type="eggNOG" id="COG0227">
    <property type="taxonomic scope" value="Bacteria"/>
</dbReference>
<dbReference type="HOGENOM" id="CLU_064548_3_1_6"/>
<dbReference type="Proteomes" id="UP000008540">
    <property type="component" value="Chromosome"/>
</dbReference>
<dbReference type="GO" id="GO:0022625">
    <property type="term" value="C:cytosolic large ribosomal subunit"/>
    <property type="evidence" value="ECO:0007669"/>
    <property type="project" value="TreeGrafter"/>
</dbReference>
<dbReference type="GO" id="GO:0003735">
    <property type="term" value="F:structural constituent of ribosome"/>
    <property type="evidence" value="ECO:0007669"/>
    <property type="project" value="InterPro"/>
</dbReference>
<dbReference type="GO" id="GO:0006412">
    <property type="term" value="P:translation"/>
    <property type="evidence" value="ECO:0007669"/>
    <property type="project" value="UniProtKB-UniRule"/>
</dbReference>
<dbReference type="FunFam" id="2.30.170.40:FF:000001">
    <property type="entry name" value="50S ribosomal protein L28"/>
    <property type="match status" value="1"/>
</dbReference>
<dbReference type="Gene3D" id="2.30.170.40">
    <property type="entry name" value="Ribosomal protein L28/L24"/>
    <property type="match status" value="1"/>
</dbReference>
<dbReference type="HAMAP" id="MF_00373">
    <property type="entry name" value="Ribosomal_bL28"/>
    <property type="match status" value="1"/>
</dbReference>
<dbReference type="InterPro" id="IPR026569">
    <property type="entry name" value="Ribosomal_bL28"/>
</dbReference>
<dbReference type="InterPro" id="IPR034704">
    <property type="entry name" value="Ribosomal_bL28/bL31-like_sf"/>
</dbReference>
<dbReference type="InterPro" id="IPR001383">
    <property type="entry name" value="Ribosomal_bL28_bact-type"/>
</dbReference>
<dbReference type="InterPro" id="IPR037147">
    <property type="entry name" value="Ribosomal_bL28_sf"/>
</dbReference>
<dbReference type="NCBIfam" id="TIGR00009">
    <property type="entry name" value="L28"/>
    <property type="match status" value="1"/>
</dbReference>
<dbReference type="PANTHER" id="PTHR13528">
    <property type="entry name" value="39S RIBOSOMAL PROTEIN L28, MITOCHONDRIAL"/>
    <property type="match status" value="1"/>
</dbReference>
<dbReference type="PANTHER" id="PTHR13528:SF2">
    <property type="entry name" value="LARGE RIBOSOMAL SUBUNIT PROTEIN BL28M"/>
    <property type="match status" value="1"/>
</dbReference>
<dbReference type="Pfam" id="PF00830">
    <property type="entry name" value="Ribosomal_L28"/>
    <property type="match status" value="1"/>
</dbReference>
<dbReference type="SUPFAM" id="SSF143800">
    <property type="entry name" value="L28p-like"/>
    <property type="match status" value="1"/>
</dbReference>
<feature type="chain" id="PRO_1000007314" description="Large ribosomal subunit protein bL28">
    <location>
        <begin position="1"/>
        <end position="78"/>
    </location>
</feature>
<feature type="region of interest" description="Disordered" evidence="2">
    <location>
        <begin position="1"/>
        <end position="20"/>
    </location>
</feature>
<keyword id="KW-0687">Ribonucleoprotein</keyword>
<keyword id="KW-0689">Ribosomal protein</keyword>
<gene>
    <name evidence="1" type="primary">rpmB</name>
    <name type="ordered locus">PFL_6049</name>
</gene>
<evidence type="ECO:0000255" key="1">
    <source>
        <dbReference type="HAMAP-Rule" id="MF_00373"/>
    </source>
</evidence>
<evidence type="ECO:0000256" key="2">
    <source>
        <dbReference type="SAM" id="MobiDB-lite"/>
    </source>
</evidence>
<evidence type="ECO:0000305" key="3"/>
<comment type="similarity">
    <text evidence="1">Belongs to the bacterial ribosomal protein bL28 family.</text>
</comment>
<accession>Q4K3S6</accession>
<organism>
    <name type="scientific">Pseudomonas fluorescens (strain ATCC BAA-477 / NRRL B-23932 / Pf-5)</name>
    <dbReference type="NCBI Taxonomy" id="220664"/>
    <lineage>
        <taxon>Bacteria</taxon>
        <taxon>Pseudomonadati</taxon>
        <taxon>Pseudomonadota</taxon>
        <taxon>Gammaproteobacteria</taxon>
        <taxon>Pseudomonadales</taxon>
        <taxon>Pseudomonadaceae</taxon>
        <taxon>Pseudomonas</taxon>
    </lineage>
</organism>
<reference key="1">
    <citation type="journal article" date="2005" name="Nat. Biotechnol.">
        <title>Complete genome sequence of the plant commensal Pseudomonas fluorescens Pf-5.</title>
        <authorList>
            <person name="Paulsen I.T."/>
            <person name="Press C.M."/>
            <person name="Ravel J."/>
            <person name="Kobayashi D.Y."/>
            <person name="Myers G.S.A."/>
            <person name="Mavrodi D.V."/>
            <person name="DeBoy R.T."/>
            <person name="Seshadri R."/>
            <person name="Ren Q."/>
            <person name="Madupu R."/>
            <person name="Dodson R.J."/>
            <person name="Durkin A.S."/>
            <person name="Brinkac L.M."/>
            <person name="Daugherty S.C."/>
            <person name="Sullivan S.A."/>
            <person name="Rosovitz M.J."/>
            <person name="Gwinn M.L."/>
            <person name="Zhou L."/>
            <person name="Schneider D.J."/>
            <person name="Cartinhour S.W."/>
            <person name="Nelson W.C."/>
            <person name="Weidman J."/>
            <person name="Watkins K."/>
            <person name="Tran K."/>
            <person name="Khouri H."/>
            <person name="Pierson E.A."/>
            <person name="Pierson L.S. III"/>
            <person name="Thomashow L.S."/>
            <person name="Loper J.E."/>
        </authorList>
    </citation>
    <scope>NUCLEOTIDE SEQUENCE [LARGE SCALE GENOMIC DNA]</scope>
    <source>
        <strain>ATCC BAA-477 / NRRL B-23932 / Pf-5</strain>
    </source>
</reference>
<proteinExistence type="inferred from homology"/>